<proteinExistence type="inferred from homology"/>
<feature type="chain" id="PRO_0000369311" description="Molybdopterin synthase sulfur carrier subunit">
    <location>
        <begin position="1"/>
        <end position="90"/>
    </location>
</feature>
<feature type="modified residue" description="1-thioglycine; alternate" evidence="2">
    <location>
        <position position="90"/>
    </location>
</feature>
<feature type="modified residue" description="Glycyl adenylate; alternate" evidence="2">
    <location>
        <position position="90"/>
    </location>
</feature>
<name>MOC2A_DROER</name>
<keyword id="KW-0963">Cytoplasm</keyword>
<keyword id="KW-0501">Molybdenum cofactor biosynthesis</keyword>
<keyword id="KW-0547">Nucleotide-binding</keyword>
<keyword id="KW-0597">Phosphoprotein</keyword>
<organism>
    <name type="scientific">Drosophila erecta</name>
    <name type="common">Fruit fly</name>
    <dbReference type="NCBI Taxonomy" id="7220"/>
    <lineage>
        <taxon>Eukaryota</taxon>
        <taxon>Metazoa</taxon>
        <taxon>Ecdysozoa</taxon>
        <taxon>Arthropoda</taxon>
        <taxon>Hexapoda</taxon>
        <taxon>Insecta</taxon>
        <taxon>Pterygota</taxon>
        <taxon>Neoptera</taxon>
        <taxon>Endopterygota</taxon>
        <taxon>Diptera</taxon>
        <taxon>Brachycera</taxon>
        <taxon>Muscomorpha</taxon>
        <taxon>Ephydroidea</taxon>
        <taxon>Drosophilidae</taxon>
        <taxon>Drosophila</taxon>
        <taxon>Sophophora</taxon>
    </lineage>
</organism>
<comment type="function">
    <text evidence="2">Acts as a sulfur carrier required for molybdopterin biosynthesis. Component of the molybdopterin synthase complex that catalyzes the conversion of precursor Z into molybdopterin by mediating the incorporation of 2 sulfur atoms into precursor Z to generate a dithiolene group. In the complex, serves as sulfur donor by being thiocarboxylated (-COSH) at its C-terminus by MOCS3. After interaction with Mocs2B, the sulfur is then transferred to precursor Z to form molybdopterin.</text>
</comment>
<comment type="pathway">
    <text evidence="2">Cofactor biosynthesis; molybdopterin biosynthesis.</text>
</comment>
<comment type="subunit">
    <text evidence="2">Heterotetramer; composed of 2 small (Mocs2A) and 2 large (Mocs2B) subunits.</text>
</comment>
<comment type="subcellular location">
    <subcellularLocation>
        <location evidence="2">Cytoplasm</location>
    </subcellularLocation>
</comment>
<comment type="PTM">
    <text evidence="2">C-terminal thiocarboxylation occurs in 2 steps, it is first acyl-adenylated (-COAMP) via the hesA/moeB/thiF part of MOCS3, then thiocarboxylated (-COSH) via the rhodanese domain of MOCS3.</text>
</comment>
<comment type="miscellaneous">
    <text>This protein is produced by a bicistronic gene which also produces the large subunit (Mocs2B).</text>
</comment>
<comment type="similarity">
    <text evidence="2">Belongs to the MoaD family. MOCS2A subfamily.</text>
</comment>
<reference key="1">
    <citation type="journal article" date="2007" name="Nature">
        <title>Evolution of genes and genomes on the Drosophila phylogeny.</title>
        <authorList>
            <consortium name="Drosophila 12 genomes consortium"/>
        </authorList>
    </citation>
    <scope>NUCLEOTIDE SEQUENCE [LARGE SCALE GENOMIC DNA]</scope>
    <source>
        <strain>Tucson 14021-0224.01</strain>
    </source>
</reference>
<evidence type="ECO:0000250" key="1">
    <source>
        <dbReference type="UniProtKB" id="P0C919"/>
    </source>
</evidence>
<evidence type="ECO:0000255" key="2">
    <source>
        <dbReference type="HAMAP-Rule" id="MF_03051"/>
    </source>
</evidence>
<dbReference type="EMBL" id="CH954182">
    <property type="protein sequence ID" value="EDV53734.1"/>
    <property type="molecule type" value="Genomic_DNA"/>
</dbReference>
<dbReference type="SMR" id="B3P6R4"/>
<dbReference type="EnsemblMetazoa" id="FBtr0132337">
    <property type="protein sequence ID" value="FBpp0130829"/>
    <property type="gene ID" value="FBgn0104574"/>
</dbReference>
<dbReference type="EnsemblMetazoa" id="XM_001981828.3">
    <property type="protein sequence ID" value="XP_001981864.1"/>
    <property type="gene ID" value="LOC6555339"/>
</dbReference>
<dbReference type="GeneID" id="6555339"/>
<dbReference type="KEGG" id="der:6555339"/>
<dbReference type="CTD" id="8674021"/>
<dbReference type="eggNOG" id="KOG3474">
    <property type="taxonomic scope" value="Eukaryota"/>
</dbReference>
<dbReference type="HOGENOM" id="CLU_114601_4_3_1"/>
<dbReference type="OMA" id="HVLFFAK"/>
<dbReference type="OrthoDB" id="5531344at2759"/>
<dbReference type="PhylomeDB" id="B3P6R4"/>
<dbReference type="UniPathway" id="UPA00344"/>
<dbReference type="Proteomes" id="UP000008711">
    <property type="component" value="Unassembled WGS sequence"/>
</dbReference>
<dbReference type="GO" id="GO:0005829">
    <property type="term" value="C:cytosol"/>
    <property type="evidence" value="ECO:0000250"/>
    <property type="project" value="UniProtKB"/>
</dbReference>
<dbReference type="GO" id="GO:1990133">
    <property type="term" value="C:molybdopterin adenylyltransferase complex"/>
    <property type="evidence" value="ECO:0007669"/>
    <property type="project" value="TreeGrafter"/>
</dbReference>
<dbReference type="GO" id="GO:1990140">
    <property type="term" value="C:molybdopterin synthase complex"/>
    <property type="evidence" value="ECO:0000250"/>
    <property type="project" value="UniProtKB"/>
</dbReference>
<dbReference type="GO" id="GO:0030366">
    <property type="term" value="F:molybdopterin synthase activity"/>
    <property type="evidence" value="ECO:0007669"/>
    <property type="project" value="UniProtKB-UniRule"/>
</dbReference>
<dbReference type="GO" id="GO:0000166">
    <property type="term" value="F:nucleotide binding"/>
    <property type="evidence" value="ECO:0007669"/>
    <property type="project" value="UniProtKB-KW"/>
</dbReference>
<dbReference type="GO" id="GO:0006777">
    <property type="term" value="P:Mo-molybdopterin cofactor biosynthetic process"/>
    <property type="evidence" value="ECO:0000250"/>
    <property type="project" value="UniProtKB"/>
</dbReference>
<dbReference type="CDD" id="cd00754">
    <property type="entry name" value="Ubl_MoaD"/>
    <property type="match status" value="1"/>
</dbReference>
<dbReference type="FunFam" id="3.10.20.30:FF:000010">
    <property type="entry name" value="Molybdopterin synthase sulfur carrier subunit"/>
    <property type="match status" value="1"/>
</dbReference>
<dbReference type="Gene3D" id="3.10.20.30">
    <property type="match status" value="1"/>
</dbReference>
<dbReference type="HAMAP" id="MF_03051">
    <property type="entry name" value="MOCS2A"/>
    <property type="match status" value="1"/>
</dbReference>
<dbReference type="InterPro" id="IPR012675">
    <property type="entry name" value="Beta-grasp_dom_sf"/>
</dbReference>
<dbReference type="InterPro" id="IPR044672">
    <property type="entry name" value="MOCS2A"/>
</dbReference>
<dbReference type="InterPro" id="IPR028887">
    <property type="entry name" value="MOCS2A_euk"/>
</dbReference>
<dbReference type="InterPro" id="IPR016155">
    <property type="entry name" value="Mopterin_synth/thiamin_S_b"/>
</dbReference>
<dbReference type="InterPro" id="IPR003749">
    <property type="entry name" value="ThiS/MoaD-like"/>
</dbReference>
<dbReference type="NCBIfam" id="TIGR01682">
    <property type="entry name" value="moaD"/>
    <property type="match status" value="1"/>
</dbReference>
<dbReference type="PANTHER" id="PTHR33359">
    <property type="entry name" value="MOLYBDOPTERIN SYNTHASE SULFUR CARRIER SUBUNIT"/>
    <property type="match status" value="1"/>
</dbReference>
<dbReference type="PANTHER" id="PTHR33359:SF1">
    <property type="entry name" value="MOLYBDOPTERIN SYNTHASE SULFUR CARRIER SUBUNIT"/>
    <property type="match status" value="1"/>
</dbReference>
<dbReference type="Pfam" id="PF02597">
    <property type="entry name" value="ThiS"/>
    <property type="match status" value="1"/>
</dbReference>
<dbReference type="SUPFAM" id="SSF54285">
    <property type="entry name" value="MoaD/ThiS"/>
    <property type="match status" value="1"/>
</dbReference>
<sequence>MNADGPVVNVHVLFFAKSRELANTPRSKVDVPTKITASDLLDLLVSRFGLISIRDNLILAHNESYIDNLSDTVLFKEGDELAIIPPLSGG</sequence>
<gene>
    <name evidence="1" type="primary">Mocs2A</name>
    <name evidence="2" type="synonym">Mocs2</name>
    <name type="ORF">GG12283</name>
</gene>
<accession>B3P6R4</accession>
<protein>
    <recommendedName>
        <fullName evidence="2">Molybdopterin synthase sulfur carrier subunit</fullName>
    </recommendedName>
    <alternativeName>
        <fullName evidence="2">Molybdenum cofactor synthesis protein 2 small subunit</fullName>
    </alternativeName>
    <alternativeName>
        <fullName evidence="2">Molybdenum cofactor synthesis protein 2A</fullName>
        <shortName evidence="2">MOCS2A</shortName>
    </alternativeName>
    <alternativeName>
        <fullName evidence="2">Sulfur carrier protein MOCS2A</fullName>
    </alternativeName>
</protein>